<sequence>MEKLTILLHVAAVLMSTQALIQEQRQKAKINLFSKRKPSAERWWGDNGCSLWGSCTVDAECCLGNCGGMYCSLLR</sequence>
<comment type="function">
    <text evidence="1">Inhibits voltage-gated ion channels.</text>
</comment>
<comment type="subcellular location">
    <subcellularLocation>
        <location evidence="1">Secreted</location>
    </subcellularLocation>
</comment>
<comment type="tissue specificity">
    <text>Expressed by the venom duct.</text>
</comment>
<comment type="developmental stage">
    <text evidence="3">Only expressed in embryos.</text>
</comment>
<comment type="domain">
    <text evidence="1">The presence of a 'disulfide through disulfide knot' structurally defines this protein as a knottin.</text>
</comment>
<comment type="domain">
    <text>The cysteine framework is VI/VII (C-C-CC-C-C).</text>
</comment>
<comment type="similarity">
    <text evidence="4">Belongs to the conotoxin O2 superfamily.</text>
</comment>
<organism>
    <name type="scientific">Conus victoriae</name>
    <name type="common">Queen Victoria cone</name>
    <dbReference type="NCBI Taxonomy" id="319920"/>
    <lineage>
        <taxon>Eukaryota</taxon>
        <taxon>Metazoa</taxon>
        <taxon>Spiralia</taxon>
        <taxon>Lophotrochozoa</taxon>
        <taxon>Mollusca</taxon>
        <taxon>Gastropoda</taxon>
        <taxon>Caenogastropoda</taxon>
        <taxon>Neogastropoda</taxon>
        <taxon>Conoidea</taxon>
        <taxon>Conidae</taxon>
        <taxon>Conus</taxon>
        <taxon>Cylinder</taxon>
    </lineage>
</organism>
<name>O26F_CONVC</name>
<proteinExistence type="evidence at transcript level"/>
<accession>G1AS81</accession>
<dbReference type="EMBL" id="JF433908">
    <property type="protein sequence ID" value="AEA35364.1"/>
    <property type="molecule type" value="mRNA"/>
</dbReference>
<dbReference type="ConoServer" id="4276">
    <property type="toxin name" value="Vc6.15 precursor"/>
</dbReference>
<dbReference type="GO" id="GO:0005576">
    <property type="term" value="C:extracellular region"/>
    <property type="evidence" value="ECO:0007669"/>
    <property type="project" value="UniProtKB-SubCell"/>
</dbReference>
<dbReference type="GO" id="GO:0008200">
    <property type="term" value="F:ion channel inhibitor activity"/>
    <property type="evidence" value="ECO:0007669"/>
    <property type="project" value="InterPro"/>
</dbReference>
<dbReference type="GO" id="GO:0090729">
    <property type="term" value="F:toxin activity"/>
    <property type="evidence" value="ECO:0007669"/>
    <property type="project" value="UniProtKB-KW"/>
</dbReference>
<dbReference type="InterPro" id="IPR004214">
    <property type="entry name" value="Conotoxin"/>
</dbReference>
<dbReference type="Pfam" id="PF02950">
    <property type="entry name" value="Conotoxin"/>
    <property type="match status" value="1"/>
</dbReference>
<evidence type="ECO:0000250" key="1"/>
<evidence type="ECO:0000255" key="2"/>
<evidence type="ECO:0000269" key="3">
    <source>
    </source>
</evidence>
<evidence type="ECO:0000305" key="4"/>
<keyword id="KW-1015">Disulfide bond</keyword>
<keyword id="KW-0872">Ion channel impairing toxin</keyword>
<keyword id="KW-0960">Knottin</keyword>
<keyword id="KW-0964">Secreted</keyword>
<keyword id="KW-0732">Signal</keyword>
<keyword id="KW-0800">Toxin</keyword>
<feature type="signal peptide" evidence="2">
    <location>
        <begin position="1"/>
        <end position="19"/>
    </location>
</feature>
<feature type="propeptide" id="PRO_0000425179" evidence="1">
    <location>
        <begin position="20"/>
        <end position="41"/>
    </location>
</feature>
<feature type="peptide" id="PRO_0000425180" description="Conotoxin Vc6.15">
    <location>
        <begin position="43"/>
        <end position="75"/>
    </location>
</feature>
<feature type="disulfide bond" evidence="1">
    <location>
        <begin position="49"/>
        <end position="62"/>
    </location>
</feature>
<feature type="disulfide bond" evidence="1">
    <location>
        <begin position="55"/>
        <end position="66"/>
    </location>
</feature>
<feature type="disulfide bond" evidence="1">
    <location>
        <begin position="61"/>
        <end position="71"/>
    </location>
</feature>
<reference key="1">
    <citation type="journal article" date="2011" name="J. Biol. Chem.">
        <title>Embryonic toxin expression in the cone snail Conus victoriae: primed to kill or divergent function?</title>
        <authorList>
            <person name="Safavi-Hemami H."/>
            <person name="Siero W.A."/>
            <person name="Kuang Z."/>
            <person name="Williamson N.A."/>
            <person name="Karas J.A."/>
            <person name="Page L.R."/>
            <person name="Macmillan D."/>
            <person name="Callaghan B."/>
            <person name="Kompella S.N."/>
            <person name="Adams D.J."/>
            <person name="Norton R.S."/>
            <person name="Purcell A.W."/>
        </authorList>
    </citation>
    <scope>NUCLEOTIDE SEQUENCE [MRNA]</scope>
    <scope>DEVELOPMENTAL STAGE</scope>
    <source>
        <tissue>Embryo</tissue>
        <tissue>Venom duct</tissue>
    </source>
</reference>
<protein>
    <recommendedName>
        <fullName>Conotoxin Vc6.15</fullName>
    </recommendedName>
</protein>